<gene>
    <name type="primary">OR1C1</name>
</gene>
<evidence type="ECO:0000255" key="1"/>
<evidence type="ECO:0000255" key="2">
    <source>
        <dbReference type="PROSITE-ProRule" id="PRU00521"/>
    </source>
</evidence>
<evidence type="ECO:0000305" key="3"/>
<accession>Q15619</accession>
<accession>B9EIR9</accession>
<accession>Q5VVD2</accession>
<accession>Q6IF97</accession>
<accession>Q8NGZ1</accession>
<accession>Q96R83</accession>
<reference key="1">
    <citation type="submission" date="2001-07" db="EMBL/GenBank/DDBJ databases">
        <title>Genome-wide discovery and analysis of human seven transmembrane helix receptor genes.</title>
        <authorList>
            <person name="Suwa M."/>
            <person name="Sato T."/>
            <person name="Okouchi I."/>
            <person name="Arita M."/>
            <person name="Futami K."/>
            <person name="Matsumoto S."/>
            <person name="Tsutsumi S."/>
            <person name="Aburatani H."/>
            <person name="Asai K."/>
            <person name="Akiyama Y."/>
        </authorList>
    </citation>
    <scope>NUCLEOTIDE SEQUENCE [GENOMIC DNA]</scope>
</reference>
<reference key="2">
    <citation type="journal article" date="2006" name="Nature">
        <title>The DNA sequence and biological annotation of human chromosome 1.</title>
        <authorList>
            <person name="Gregory S.G."/>
            <person name="Barlow K.F."/>
            <person name="McLay K.E."/>
            <person name="Kaul R."/>
            <person name="Swarbreck D."/>
            <person name="Dunham A."/>
            <person name="Scott C.E."/>
            <person name="Howe K.L."/>
            <person name="Woodfine K."/>
            <person name="Spencer C.C.A."/>
            <person name="Jones M.C."/>
            <person name="Gillson C."/>
            <person name="Searle S."/>
            <person name="Zhou Y."/>
            <person name="Kokocinski F."/>
            <person name="McDonald L."/>
            <person name="Evans R."/>
            <person name="Phillips K."/>
            <person name="Atkinson A."/>
            <person name="Cooper R."/>
            <person name="Jones C."/>
            <person name="Hall R.E."/>
            <person name="Andrews T.D."/>
            <person name="Lloyd C."/>
            <person name="Ainscough R."/>
            <person name="Almeida J.P."/>
            <person name="Ambrose K.D."/>
            <person name="Anderson F."/>
            <person name="Andrew R.W."/>
            <person name="Ashwell R.I.S."/>
            <person name="Aubin K."/>
            <person name="Babbage A.K."/>
            <person name="Bagguley C.L."/>
            <person name="Bailey J."/>
            <person name="Beasley H."/>
            <person name="Bethel G."/>
            <person name="Bird C.P."/>
            <person name="Bray-Allen S."/>
            <person name="Brown J.Y."/>
            <person name="Brown A.J."/>
            <person name="Buckley D."/>
            <person name="Burton J."/>
            <person name="Bye J."/>
            <person name="Carder C."/>
            <person name="Chapman J.C."/>
            <person name="Clark S.Y."/>
            <person name="Clarke G."/>
            <person name="Clee C."/>
            <person name="Cobley V."/>
            <person name="Collier R.E."/>
            <person name="Corby N."/>
            <person name="Coville G.J."/>
            <person name="Davies J."/>
            <person name="Deadman R."/>
            <person name="Dunn M."/>
            <person name="Earthrowl M."/>
            <person name="Ellington A.G."/>
            <person name="Errington H."/>
            <person name="Frankish A."/>
            <person name="Frankland J."/>
            <person name="French L."/>
            <person name="Garner P."/>
            <person name="Garnett J."/>
            <person name="Gay L."/>
            <person name="Ghori M.R.J."/>
            <person name="Gibson R."/>
            <person name="Gilby L.M."/>
            <person name="Gillett W."/>
            <person name="Glithero R.J."/>
            <person name="Grafham D.V."/>
            <person name="Griffiths C."/>
            <person name="Griffiths-Jones S."/>
            <person name="Grocock R."/>
            <person name="Hammond S."/>
            <person name="Harrison E.S.I."/>
            <person name="Hart E."/>
            <person name="Haugen E."/>
            <person name="Heath P.D."/>
            <person name="Holmes S."/>
            <person name="Holt K."/>
            <person name="Howden P.J."/>
            <person name="Hunt A.R."/>
            <person name="Hunt S.E."/>
            <person name="Hunter G."/>
            <person name="Isherwood J."/>
            <person name="James R."/>
            <person name="Johnson C."/>
            <person name="Johnson D."/>
            <person name="Joy A."/>
            <person name="Kay M."/>
            <person name="Kershaw J.K."/>
            <person name="Kibukawa M."/>
            <person name="Kimberley A.M."/>
            <person name="King A."/>
            <person name="Knights A.J."/>
            <person name="Lad H."/>
            <person name="Laird G."/>
            <person name="Lawlor S."/>
            <person name="Leongamornlert D.A."/>
            <person name="Lloyd D.M."/>
            <person name="Loveland J."/>
            <person name="Lovell J."/>
            <person name="Lush M.J."/>
            <person name="Lyne R."/>
            <person name="Martin S."/>
            <person name="Mashreghi-Mohammadi M."/>
            <person name="Matthews L."/>
            <person name="Matthews N.S.W."/>
            <person name="McLaren S."/>
            <person name="Milne S."/>
            <person name="Mistry S."/>
            <person name="Moore M.J.F."/>
            <person name="Nickerson T."/>
            <person name="O'Dell C.N."/>
            <person name="Oliver K."/>
            <person name="Palmeiri A."/>
            <person name="Palmer S.A."/>
            <person name="Parker A."/>
            <person name="Patel D."/>
            <person name="Pearce A.V."/>
            <person name="Peck A.I."/>
            <person name="Pelan S."/>
            <person name="Phelps K."/>
            <person name="Phillimore B.J."/>
            <person name="Plumb R."/>
            <person name="Rajan J."/>
            <person name="Raymond C."/>
            <person name="Rouse G."/>
            <person name="Saenphimmachak C."/>
            <person name="Sehra H.K."/>
            <person name="Sheridan E."/>
            <person name="Shownkeen R."/>
            <person name="Sims S."/>
            <person name="Skuce C.D."/>
            <person name="Smith M."/>
            <person name="Steward C."/>
            <person name="Subramanian S."/>
            <person name="Sycamore N."/>
            <person name="Tracey A."/>
            <person name="Tromans A."/>
            <person name="Van Helmond Z."/>
            <person name="Wall M."/>
            <person name="Wallis J.M."/>
            <person name="White S."/>
            <person name="Whitehead S.L."/>
            <person name="Wilkinson J.E."/>
            <person name="Willey D.L."/>
            <person name="Williams H."/>
            <person name="Wilming L."/>
            <person name="Wray P.W."/>
            <person name="Wu Z."/>
            <person name="Coulson A."/>
            <person name="Vaudin M."/>
            <person name="Sulston J.E."/>
            <person name="Durbin R.M."/>
            <person name="Hubbard T."/>
            <person name="Wooster R."/>
            <person name="Dunham I."/>
            <person name="Carter N.P."/>
            <person name="McVean G."/>
            <person name="Ross M.T."/>
            <person name="Harrow J."/>
            <person name="Olson M.V."/>
            <person name="Beck S."/>
            <person name="Rogers J."/>
            <person name="Bentley D.R."/>
        </authorList>
    </citation>
    <scope>NUCLEOTIDE SEQUENCE [LARGE SCALE GENOMIC DNA]</scope>
</reference>
<reference key="3">
    <citation type="submission" date="2005-07" db="EMBL/GenBank/DDBJ databases">
        <authorList>
            <person name="Mural R.J."/>
            <person name="Istrail S."/>
            <person name="Sutton G.G."/>
            <person name="Florea L."/>
            <person name="Halpern A.L."/>
            <person name="Mobarry C.M."/>
            <person name="Lippert R."/>
            <person name="Walenz B."/>
            <person name="Shatkay H."/>
            <person name="Dew I."/>
            <person name="Miller J.R."/>
            <person name="Flanigan M.J."/>
            <person name="Edwards N.J."/>
            <person name="Bolanos R."/>
            <person name="Fasulo D."/>
            <person name="Halldorsson B.V."/>
            <person name="Hannenhalli S."/>
            <person name="Turner R."/>
            <person name="Yooseph S."/>
            <person name="Lu F."/>
            <person name="Nusskern D.R."/>
            <person name="Shue B.C."/>
            <person name="Zheng X.H."/>
            <person name="Zhong F."/>
            <person name="Delcher A.L."/>
            <person name="Huson D.H."/>
            <person name="Kravitz S.A."/>
            <person name="Mouchard L."/>
            <person name="Reinert K."/>
            <person name="Remington K.A."/>
            <person name="Clark A.G."/>
            <person name="Waterman M.S."/>
            <person name="Eichler E.E."/>
            <person name="Adams M.D."/>
            <person name="Hunkapiller M.W."/>
            <person name="Myers E.W."/>
            <person name="Venter J.C."/>
        </authorList>
    </citation>
    <scope>NUCLEOTIDE SEQUENCE [LARGE SCALE GENOMIC DNA]</scope>
</reference>
<reference key="4">
    <citation type="journal article" date="2004" name="Genome Res.">
        <title>The status, quality, and expansion of the NIH full-length cDNA project: the Mammalian Gene Collection (MGC).</title>
        <authorList>
            <consortium name="The MGC Project Team"/>
        </authorList>
    </citation>
    <scope>NUCLEOTIDE SEQUENCE [LARGE SCALE MRNA]</scope>
</reference>
<reference key="5">
    <citation type="journal article" date="2002" name="Genomics">
        <title>DEFOG: a practical scheme for deciphering families of genes.</title>
        <authorList>
            <person name="Fuchs T."/>
            <person name="Malecova B."/>
            <person name="Linhart C."/>
            <person name="Sharan R."/>
            <person name="Khen M."/>
            <person name="Herwig R."/>
            <person name="Shmulevich D."/>
            <person name="Elkon R."/>
            <person name="Steinfath M."/>
            <person name="O'Brien J.K."/>
            <person name="Radelof U."/>
            <person name="Lehrach H."/>
            <person name="Lancet D."/>
            <person name="Shamir R."/>
        </authorList>
    </citation>
    <scope>NUCLEOTIDE SEQUENCE [GENOMIC DNA] OF 68-283</scope>
</reference>
<reference key="6">
    <citation type="journal article" date="1997" name="Genomics">
        <title>Specific repertoire of olfactory receptor genes in the male germ cells of several mammalian species.</title>
        <authorList>
            <person name="Vanderhaeghen P."/>
            <person name="Schurmans S."/>
            <person name="Vassart G."/>
            <person name="Parmentier M."/>
        </authorList>
    </citation>
    <scope>NUCLEOTIDE SEQUENCE [MRNA] OF 126-282</scope>
    <source>
        <tissue>Testis</tissue>
    </source>
</reference>
<reference key="7">
    <citation type="journal article" date="2004" name="Proc. Natl. Acad. Sci. U.S.A.">
        <title>The human olfactory receptor gene family.</title>
        <authorList>
            <person name="Malnic B."/>
            <person name="Godfrey P.A."/>
            <person name="Buck L.B."/>
        </authorList>
    </citation>
    <scope>IDENTIFICATION</scope>
</reference>
<reference key="8">
    <citation type="journal article" date="2004" name="Proc. Natl. Acad. Sci. U.S.A.">
        <authorList>
            <person name="Malnic B."/>
            <person name="Godfrey P.A."/>
            <person name="Buck L.B."/>
        </authorList>
    </citation>
    <scope>ERRATUM OF PUBMED:14983052</scope>
</reference>
<proteinExistence type="evidence at transcript level"/>
<feature type="chain" id="PRO_0000150417" description="Olfactory receptor 1C1">
    <location>
        <begin position="1"/>
        <end position="314"/>
    </location>
</feature>
<feature type="topological domain" description="Extracellular" evidence="1">
    <location>
        <begin position="1"/>
        <end position="25"/>
    </location>
</feature>
<feature type="transmembrane region" description="Helical; Name=1" evidence="1">
    <location>
        <begin position="26"/>
        <end position="49"/>
    </location>
</feature>
<feature type="topological domain" description="Cytoplasmic" evidence="1">
    <location>
        <begin position="50"/>
        <end position="57"/>
    </location>
</feature>
<feature type="transmembrane region" description="Helical; Name=2" evidence="1">
    <location>
        <begin position="58"/>
        <end position="79"/>
    </location>
</feature>
<feature type="topological domain" description="Extracellular" evidence="1">
    <location>
        <begin position="80"/>
        <end position="100"/>
    </location>
</feature>
<feature type="transmembrane region" description="Helical; Name=3" evidence="1">
    <location>
        <begin position="101"/>
        <end position="120"/>
    </location>
</feature>
<feature type="topological domain" description="Cytoplasmic" evidence="1">
    <location>
        <begin position="121"/>
        <end position="139"/>
    </location>
</feature>
<feature type="transmembrane region" description="Helical; Name=4" evidence="1">
    <location>
        <begin position="140"/>
        <end position="158"/>
    </location>
</feature>
<feature type="topological domain" description="Extracellular" evidence="1">
    <location>
        <begin position="159"/>
        <end position="195"/>
    </location>
</feature>
<feature type="transmembrane region" description="Helical; Name=5" evidence="1">
    <location>
        <begin position="196"/>
        <end position="219"/>
    </location>
</feature>
<feature type="topological domain" description="Cytoplasmic" evidence="1">
    <location>
        <begin position="220"/>
        <end position="236"/>
    </location>
</feature>
<feature type="transmembrane region" description="Helical; Name=6" evidence="1">
    <location>
        <begin position="237"/>
        <end position="259"/>
    </location>
</feature>
<feature type="topological domain" description="Extracellular" evidence="1">
    <location>
        <begin position="260"/>
        <end position="272"/>
    </location>
</feature>
<feature type="transmembrane region" description="Helical; Name=7" evidence="1">
    <location>
        <begin position="273"/>
        <end position="292"/>
    </location>
</feature>
<feature type="topological domain" description="Cytoplasmic" evidence="1">
    <location>
        <begin position="293"/>
        <end position="314"/>
    </location>
</feature>
<feature type="disulfide bond" evidence="2">
    <location>
        <begin position="97"/>
        <end position="189"/>
    </location>
</feature>
<feature type="sequence variant" id="VAR_053118" description="In dbSNP:rs12068080.">
    <original>T</original>
    <variation>M</variation>
    <location>
        <position position="209"/>
    </location>
</feature>
<feature type="sequence conflict" description="In Ref. 5 and 6." evidence="3" ref="5 6">
    <original>F</original>
    <variation>L</variation>
    <location>
        <position position="178"/>
    </location>
</feature>
<feature type="sequence conflict" description="In Ref. 5 and 6." evidence="3" ref="5 6">
    <original>G</original>
    <variation>D</variation>
    <location>
        <position position="204"/>
    </location>
</feature>
<name>OR1C1_HUMAN</name>
<protein>
    <recommendedName>
        <fullName>Olfactory receptor 1C1</fullName>
    </recommendedName>
    <alternativeName>
        <fullName>Olfactory receptor OR1-42</fullName>
    </alternativeName>
    <alternativeName>
        <fullName>Olfactory receptor TPCR27</fullName>
    </alternativeName>
</protein>
<keyword id="KW-1003">Cell membrane</keyword>
<keyword id="KW-1015">Disulfide bond</keyword>
<keyword id="KW-0297">G-protein coupled receptor</keyword>
<keyword id="KW-0472">Membrane</keyword>
<keyword id="KW-0552">Olfaction</keyword>
<keyword id="KW-0675">Receptor</keyword>
<keyword id="KW-1185">Reference proteome</keyword>
<keyword id="KW-0716">Sensory transduction</keyword>
<keyword id="KW-0807">Transducer</keyword>
<keyword id="KW-0812">Transmembrane</keyword>
<keyword id="KW-1133">Transmembrane helix</keyword>
<comment type="function">
    <text evidence="3">Odorant receptor.</text>
</comment>
<comment type="subcellular location">
    <subcellularLocation>
        <location>Cell membrane</location>
        <topology>Multi-pass membrane protein</topology>
    </subcellularLocation>
</comment>
<comment type="similarity">
    <text evidence="2">Belongs to the G-protein coupled receptor 1 family.</text>
</comment>
<comment type="sequence caution" evidence="3">
    <conflict type="erroneous initiation">
        <sequence resource="EMBL-CDS" id="DAA04763"/>
    </conflict>
</comment>
<comment type="online information" name="Human Olfactory Receptor Data Exploratorium (HORDE)">
    <link uri="http://genome.weizmann.ac.il/horde/card/index/symbol:OR1C1"/>
</comment>
<dbReference type="EMBL" id="AB065625">
    <property type="protein sequence ID" value="BAC05851.1"/>
    <property type="molecule type" value="Genomic_DNA"/>
</dbReference>
<dbReference type="EMBL" id="AL450999">
    <property type="status" value="NOT_ANNOTATED_CDS"/>
    <property type="molecule type" value="Genomic_DNA"/>
</dbReference>
<dbReference type="EMBL" id="CH471148">
    <property type="protein sequence ID" value="EAW77202.1"/>
    <property type="molecule type" value="Genomic_DNA"/>
</dbReference>
<dbReference type="EMBL" id="BC140914">
    <property type="protein sequence ID" value="AAI40915.1"/>
    <property type="molecule type" value="mRNA"/>
</dbReference>
<dbReference type="EMBL" id="AF399560">
    <property type="protein sequence ID" value="AAK95045.1"/>
    <property type="molecule type" value="Genomic_DNA"/>
</dbReference>
<dbReference type="EMBL" id="X89674">
    <property type="protein sequence ID" value="CAA61821.1"/>
    <property type="molecule type" value="mRNA"/>
</dbReference>
<dbReference type="EMBL" id="BK004365">
    <property type="protein sequence ID" value="DAA04763.1"/>
    <property type="status" value="ALT_INIT"/>
    <property type="molecule type" value="Genomic_DNA"/>
</dbReference>
<dbReference type="CCDS" id="CCDS41481.1"/>
<dbReference type="PIR" id="S58002">
    <property type="entry name" value="S58002"/>
</dbReference>
<dbReference type="RefSeq" id="NP_036485.2">
    <property type="nucleotide sequence ID" value="NM_012353.3"/>
</dbReference>
<dbReference type="SMR" id="Q15619"/>
<dbReference type="BioGRID" id="117601">
    <property type="interactions" value="1"/>
</dbReference>
<dbReference type="FunCoup" id="Q15619">
    <property type="interactions" value="450"/>
</dbReference>
<dbReference type="IntAct" id="Q15619">
    <property type="interactions" value="1"/>
</dbReference>
<dbReference type="STRING" id="9606.ENSP00000493457"/>
<dbReference type="iPTMnet" id="Q15619"/>
<dbReference type="PhosphoSitePlus" id="Q15619"/>
<dbReference type="BioMuta" id="OR1C1"/>
<dbReference type="DMDM" id="68846933"/>
<dbReference type="MassIVE" id="Q15619"/>
<dbReference type="PaxDb" id="9606-ENSP00000386138"/>
<dbReference type="Antibodypedia" id="34733">
    <property type="antibodies" value="83 antibodies from 18 providers"/>
</dbReference>
<dbReference type="DNASU" id="26188"/>
<dbReference type="Ensembl" id="ENST00000408896.4">
    <property type="protein sequence ID" value="ENSP00000386138.2"/>
    <property type="gene ID" value="ENSG00000221888.4"/>
</dbReference>
<dbReference type="Ensembl" id="ENST00000641256.1">
    <property type="protein sequence ID" value="ENSP00000493457.1"/>
    <property type="gene ID" value="ENSG00000221888.4"/>
</dbReference>
<dbReference type="GeneID" id="26188"/>
<dbReference type="KEGG" id="hsa:26188"/>
<dbReference type="MANE-Select" id="ENST00000641256.1">
    <property type="protein sequence ID" value="ENSP00000493457.1"/>
    <property type="RefSeq nucleotide sequence ID" value="NM_012353.3"/>
    <property type="RefSeq protein sequence ID" value="NP_036485.2"/>
</dbReference>
<dbReference type="UCSC" id="uc010pza.2">
    <property type="organism name" value="human"/>
</dbReference>
<dbReference type="AGR" id="HGNC:8182"/>
<dbReference type="CTD" id="26188"/>
<dbReference type="GeneCards" id="OR1C1"/>
<dbReference type="HGNC" id="HGNC:8182">
    <property type="gene designation" value="OR1C1"/>
</dbReference>
<dbReference type="HPA" id="ENSG00000221888">
    <property type="expression patterns" value="Tissue enriched (testis)"/>
</dbReference>
<dbReference type="neXtProt" id="NX_Q15619"/>
<dbReference type="PharmGKB" id="PA32056"/>
<dbReference type="VEuPathDB" id="HostDB:ENSG00000221888"/>
<dbReference type="eggNOG" id="ENOG502RB7P">
    <property type="taxonomic scope" value="Eukaryota"/>
</dbReference>
<dbReference type="GeneTree" id="ENSGT00940000164680"/>
<dbReference type="HOGENOM" id="CLU_012526_1_3_1"/>
<dbReference type="InParanoid" id="Q15619"/>
<dbReference type="OMA" id="ISFVNMD"/>
<dbReference type="OrthoDB" id="9444602at2759"/>
<dbReference type="PAN-GO" id="Q15619">
    <property type="GO annotations" value="3 GO annotations based on evolutionary models"/>
</dbReference>
<dbReference type="PhylomeDB" id="Q15619"/>
<dbReference type="TreeFam" id="TF337210"/>
<dbReference type="PathwayCommons" id="Q15619"/>
<dbReference type="Reactome" id="R-HSA-381753">
    <property type="pathway name" value="Olfactory Signaling Pathway"/>
</dbReference>
<dbReference type="Reactome" id="R-HSA-9752946">
    <property type="pathway name" value="Expression and translocation of olfactory receptors"/>
</dbReference>
<dbReference type="SignaLink" id="Q15619"/>
<dbReference type="BioGRID-ORCS" id="26188">
    <property type="hits" value="8 hits in 749 CRISPR screens"/>
</dbReference>
<dbReference type="GeneWiki" id="OR1C1"/>
<dbReference type="GenomeRNAi" id="26188"/>
<dbReference type="Pharos" id="Q15619">
    <property type="development level" value="Tdark"/>
</dbReference>
<dbReference type="PRO" id="PR:Q15619"/>
<dbReference type="Proteomes" id="UP000005640">
    <property type="component" value="Chromosome 1"/>
</dbReference>
<dbReference type="RNAct" id="Q15619">
    <property type="molecule type" value="protein"/>
</dbReference>
<dbReference type="ExpressionAtlas" id="Q15619">
    <property type="expression patterns" value="baseline and differential"/>
</dbReference>
<dbReference type="GO" id="GO:0016020">
    <property type="term" value="C:membrane"/>
    <property type="evidence" value="ECO:0000303"/>
    <property type="project" value="UniProtKB"/>
</dbReference>
<dbReference type="GO" id="GO:0005886">
    <property type="term" value="C:plasma membrane"/>
    <property type="evidence" value="ECO:0000318"/>
    <property type="project" value="GO_Central"/>
</dbReference>
<dbReference type="GO" id="GO:0004930">
    <property type="term" value="F:G protein-coupled receptor activity"/>
    <property type="evidence" value="ECO:0007669"/>
    <property type="project" value="UniProtKB-KW"/>
</dbReference>
<dbReference type="GO" id="GO:0004984">
    <property type="term" value="F:olfactory receptor activity"/>
    <property type="evidence" value="ECO:0000318"/>
    <property type="project" value="GO_Central"/>
</dbReference>
<dbReference type="GO" id="GO:0007608">
    <property type="term" value="P:sensory perception of smell"/>
    <property type="evidence" value="ECO:0000303"/>
    <property type="project" value="UniProtKB"/>
</dbReference>
<dbReference type="GO" id="GO:0007165">
    <property type="term" value="P:signal transduction"/>
    <property type="evidence" value="ECO:0000318"/>
    <property type="project" value="GO_Central"/>
</dbReference>
<dbReference type="CDD" id="cd15918">
    <property type="entry name" value="7tmA_OR1_7-like"/>
    <property type="match status" value="1"/>
</dbReference>
<dbReference type="FunFam" id="1.20.1070.10:FF:000009">
    <property type="entry name" value="Olfactory receptor"/>
    <property type="match status" value="1"/>
</dbReference>
<dbReference type="Gene3D" id="1.20.1070.10">
    <property type="entry name" value="Rhodopsin 7-helix transmembrane proteins"/>
    <property type="match status" value="1"/>
</dbReference>
<dbReference type="InterPro" id="IPR000276">
    <property type="entry name" value="GPCR_Rhodpsn"/>
</dbReference>
<dbReference type="InterPro" id="IPR017452">
    <property type="entry name" value="GPCR_Rhodpsn_7TM"/>
</dbReference>
<dbReference type="InterPro" id="IPR000725">
    <property type="entry name" value="Olfact_rcpt"/>
</dbReference>
<dbReference type="PANTHER" id="PTHR48001">
    <property type="entry name" value="OLFACTORY RECEPTOR"/>
    <property type="match status" value="1"/>
</dbReference>
<dbReference type="Pfam" id="PF13853">
    <property type="entry name" value="7tm_4"/>
    <property type="match status" value="1"/>
</dbReference>
<dbReference type="PRINTS" id="PR00237">
    <property type="entry name" value="GPCRRHODOPSN"/>
</dbReference>
<dbReference type="PRINTS" id="PR00245">
    <property type="entry name" value="OLFACTORYR"/>
</dbReference>
<dbReference type="SUPFAM" id="SSF81321">
    <property type="entry name" value="Family A G protein-coupled receptor-like"/>
    <property type="match status" value="1"/>
</dbReference>
<dbReference type="PROSITE" id="PS00237">
    <property type="entry name" value="G_PROTEIN_RECEP_F1_1"/>
    <property type="match status" value="1"/>
</dbReference>
<dbReference type="PROSITE" id="PS50262">
    <property type="entry name" value="G_PROTEIN_RECEP_F1_2"/>
    <property type="match status" value="1"/>
</dbReference>
<sequence length="314" mass="35042">MEKRNLTVVREFVLLGLPSSAEQQHLLSVLFLCMYLATTLGNMLIIATIGFDSHLHSPMYFFLSNLAFVDICFTSTTVPQMVVNILTGTKTISFAGCLTQLFFFVSFVNMDSLLLCVMAYDRYVAICHPLHYTARMNLCLCVQLVAGLWLVTYLHALLHTVLIAQLSFCASNIIHHFFCDLNPLLQLSCSDVSFNVMIIFAVGGLLALTPLVCILVSYGLIFSTVLKITSTQGKQRAVSTCSCHLSVVVLFYGTAIAVYFSPSSPHMPESDTLSTIMYSMVAPMLNPFIYTLRNRDMKRGLQKMLLKCTVFQQQ</sequence>
<organism>
    <name type="scientific">Homo sapiens</name>
    <name type="common">Human</name>
    <dbReference type="NCBI Taxonomy" id="9606"/>
    <lineage>
        <taxon>Eukaryota</taxon>
        <taxon>Metazoa</taxon>
        <taxon>Chordata</taxon>
        <taxon>Craniata</taxon>
        <taxon>Vertebrata</taxon>
        <taxon>Euteleostomi</taxon>
        <taxon>Mammalia</taxon>
        <taxon>Eutheria</taxon>
        <taxon>Euarchontoglires</taxon>
        <taxon>Primates</taxon>
        <taxon>Haplorrhini</taxon>
        <taxon>Catarrhini</taxon>
        <taxon>Hominidae</taxon>
        <taxon>Homo</taxon>
    </lineage>
</organism>